<evidence type="ECO:0000255" key="1">
    <source>
        <dbReference type="HAMAP-Rule" id="MF_01863"/>
    </source>
</evidence>
<evidence type="ECO:0000256" key="2">
    <source>
        <dbReference type="SAM" id="MobiDB-lite"/>
    </source>
</evidence>
<gene>
    <name type="ordered locus">SA0550</name>
</gene>
<feature type="chain" id="PRO_0000372754" description="UPF0741 protein SA0550">
    <location>
        <begin position="1"/>
        <end position="113"/>
    </location>
</feature>
<feature type="region of interest" description="Disordered" evidence="2">
    <location>
        <begin position="68"/>
        <end position="113"/>
    </location>
</feature>
<feature type="coiled-coil region" evidence="1">
    <location>
        <begin position="78"/>
        <end position="113"/>
    </location>
</feature>
<feature type="compositionally biased region" description="Basic residues" evidence="2">
    <location>
        <begin position="85"/>
        <end position="94"/>
    </location>
</feature>
<feature type="compositionally biased region" description="Basic and acidic residues" evidence="2">
    <location>
        <begin position="95"/>
        <end position="113"/>
    </location>
</feature>
<keyword id="KW-0175">Coiled coil</keyword>
<proteinExistence type="inferred from homology"/>
<dbReference type="EMBL" id="BA000018">
    <property type="protein sequence ID" value="BAB41782.1"/>
    <property type="molecule type" value="Genomic_DNA"/>
</dbReference>
<dbReference type="PIR" id="C89828">
    <property type="entry name" value="C89828"/>
</dbReference>
<dbReference type="RefSeq" id="WP_000798967.1">
    <property type="nucleotide sequence ID" value="NC_002745.2"/>
</dbReference>
<dbReference type="SMR" id="Q7A754"/>
<dbReference type="EnsemblBacteria" id="BAB41782">
    <property type="protein sequence ID" value="BAB41782"/>
    <property type="gene ID" value="BAB41782"/>
</dbReference>
<dbReference type="KEGG" id="sau:SA0550"/>
<dbReference type="HOGENOM" id="CLU_2156795_0_0_9"/>
<dbReference type="HAMAP" id="MF_01863">
    <property type="entry name" value="UPF0741"/>
    <property type="match status" value="1"/>
</dbReference>
<dbReference type="InterPro" id="IPR009910">
    <property type="entry name" value="DUF1450"/>
</dbReference>
<dbReference type="InterPro" id="IPR020880">
    <property type="entry name" value="UPF0741"/>
</dbReference>
<dbReference type="Pfam" id="PF07293">
    <property type="entry name" value="DUF1450"/>
    <property type="match status" value="1"/>
</dbReference>
<organism>
    <name type="scientific">Staphylococcus aureus (strain N315)</name>
    <dbReference type="NCBI Taxonomy" id="158879"/>
    <lineage>
        <taxon>Bacteria</taxon>
        <taxon>Bacillati</taxon>
        <taxon>Bacillota</taxon>
        <taxon>Bacilli</taxon>
        <taxon>Bacillales</taxon>
        <taxon>Staphylococcaceae</taxon>
        <taxon>Staphylococcus</taxon>
    </lineage>
</organism>
<name>Y550_STAAN</name>
<protein>
    <recommendedName>
        <fullName evidence="1">UPF0741 protein SA0550</fullName>
    </recommendedName>
</protein>
<reference key="1">
    <citation type="journal article" date="2001" name="Lancet">
        <title>Whole genome sequencing of meticillin-resistant Staphylococcus aureus.</title>
        <authorList>
            <person name="Kuroda M."/>
            <person name="Ohta T."/>
            <person name="Uchiyama I."/>
            <person name="Baba T."/>
            <person name="Yuzawa H."/>
            <person name="Kobayashi I."/>
            <person name="Cui L."/>
            <person name="Oguchi A."/>
            <person name="Aoki K."/>
            <person name="Nagai Y."/>
            <person name="Lian J.-Q."/>
            <person name="Ito T."/>
            <person name="Kanamori M."/>
            <person name="Matsumaru H."/>
            <person name="Maruyama A."/>
            <person name="Murakami H."/>
            <person name="Hosoyama A."/>
            <person name="Mizutani-Ui Y."/>
            <person name="Takahashi N.K."/>
            <person name="Sawano T."/>
            <person name="Inoue R."/>
            <person name="Kaito C."/>
            <person name="Sekimizu K."/>
            <person name="Hirakawa H."/>
            <person name="Kuhara S."/>
            <person name="Goto S."/>
            <person name="Yabuzaki J."/>
            <person name="Kanehisa M."/>
            <person name="Yamashita A."/>
            <person name="Oshima K."/>
            <person name="Furuya K."/>
            <person name="Yoshino C."/>
            <person name="Shiba T."/>
            <person name="Hattori M."/>
            <person name="Ogasawara N."/>
            <person name="Hayashi H."/>
            <person name="Hiramatsu K."/>
        </authorList>
    </citation>
    <scope>NUCLEOTIDE SEQUENCE [LARGE SCALE GENOMIC DNA]</scope>
    <source>
        <strain>N315</strain>
    </source>
</reference>
<comment type="similarity">
    <text evidence="1">Belongs to the UPF0741 family.</text>
</comment>
<accession>Q7A754</accession>
<sequence>MKNTFLICDECQAVNIRTLQKKLEKLDPDAEIVIGCQSYCGPGRRKTFTFVNNRPLAALTEEELIEKVSQQLKKPRDPEEEERLRKRHEERKRRKEEQDRKLKEKLEKRKAQQ</sequence>